<dbReference type="EMBL" id="X62948">
    <property type="protein sequence ID" value="CAA44720.1"/>
    <property type="molecule type" value="mRNA"/>
</dbReference>
<dbReference type="EMBL" id="M74906">
    <property type="status" value="NOT_ANNOTATED_CDS"/>
    <property type="molecule type" value="mRNA"/>
</dbReference>
<dbReference type="EMBL" id="AE014297">
    <property type="protein sequence ID" value="AAF55109.1"/>
    <property type="molecule type" value="Genomic_DNA"/>
</dbReference>
<dbReference type="EMBL" id="AY061425">
    <property type="protein sequence ID" value="AAL28973.1"/>
    <property type="molecule type" value="mRNA"/>
</dbReference>
<dbReference type="PIR" id="A40269">
    <property type="entry name" value="A40269"/>
</dbReference>
<dbReference type="RefSeq" id="NP_476848.1">
    <property type="nucleotide sequence ID" value="NM_057500.4"/>
</dbReference>
<dbReference type="SMR" id="P25008"/>
<dbReference type="BioGRID" id="66871">
    <property type="interactions" value="35"/>
</dbReference>
<dbReference type="ComplexPortal" id="CPX-7701">
    <property type="entry name" value="CKM complex"/>
</dbReference>
<dbReference type="DIP" id="DIP-17706N"/>
<dbReference type="FunCoup" id="P25008">
    <property type="interactions" value="2300"/>
</dbReference>
<dbReference type="IntAct" id="P25008">
    <property type="interactions" value="29"/>
</dbReference>
<dbReference type="MINT" id="P25008"/>
<dbReference type="STRING" id="7227.FBpp0082469"/>
<dbReference type="PaxDb" id="7227-FBpp0082469"/>
<dbReference type="EnsemblMetazoa" id="FBtr0083010">
    <property type="protein sequence ID" value="FBpp0082469"/>
    <property type="gene ID" value="FBgn0004597"/>
</dbReference>
<dbReference type="GeneID" id="41801"/>
<dbReference type="KEGG" id="dme:Dmel_CG7281"/>
<dbReference type="AGR" id="FB:FBgn0004597"/>
<dbReference type="CTD" id="41801"/>
<dbReference type="FlyBase" id="FBgn0004597">
    <property type="gene designation" value="CycC"/>
</dbReference>
<dbReference type="VEuPathDB" id="VectorBase:FBgn0004597"/>
<dbReference type="eggNOG" id="KOG0794">
    <property type="taxonomic scope" value="Eukaryota"/>
</dbReference>
<dbReference type="GeneTree" id="ENSGT00940000167379"/>
<dbReference type="HOGENOM" id="CLU_034754_1_1_1"/>
<dbReference type="InParanoid" id="P25008"/>
<dbReference type="OMA" id="CLLHPPH"/>
<dbReference type="OrthoDB" id="10266018at2759"/>
<dbReference type="PhylomeDB" id="P25008"/>
<dbReference type="Reactome" id="R-DME-2173796">
    <property type="pathway name" value="SMAD2/SMAD3:SMAD4 heterotrimer regulates transcription"/>
</dbReference>
<dbReference type="Reactome" id="R-DME-9841922">
    <property type="pathway name" value="MLL4 and MLL3 complexes regulate expression of PPARG target genes in adipogenesis and hepatic steatosis"/>
</dbReference>
<dbReference type="SignaLink" id="P25008"/>
<dbReference type="BioGRID-ORCS" id="41801">
    <property type="hits" value="0 hits in 1 CRISPR screen"/>
</dbReference>
<dbReference type="GenomeRNAi" id="41801"/>
<dbReference type="PRO" id="PR:P25008"/>
<dbReference type="Proteomes" id="UP000000803">
    <property type="component" value="Chromosome 3R"/>
</dbReference>
<dbReference type="Bgee" id="FBgn0004597">
    <property type="expression patterns" value="Expressed in thoracico-abdominal ganglion (Drosophila) and 68 other cell types or tissues"/>
</dbReference>
<dbReference type="GO" id="GO:1990508">
    <property type="term" value="C:CKM complex"/>
    <property type="evidence" value="ECO:0000314"/>
    <property type="project" value="FlyBase"/>
</dbReference>
<dbReference type="GO" id="GO:0016592">
    <property type="term" value="C:mediator complex"/>
    <property type="evidence" value="ECO:0000314"/>
    <property type="project" value="UniProtKB"/>
</dbReference>
<dbReference type="GO" id="GO:0005634">
    <property type="term" value="C:nucleus"/>
    <property type="evidence" value="ECO:0000318"/>
    <property type="project" value="GO_Central"/>
</dbReference>
<dbReference type="GO" id="GO:0016538">
    <property type="term" value="F:cyclin-dependent protein serine/threonine kinase regulator activity"/>
    <property type="evidence" value="ECO:0000314"/>
    <property type="project" value="FlyBase"/>
</dbReference>
<dbReference type="GO" id="GO:0003712">
    <property type="term" value="F:transcription coregulator activity"/>
    <property type="evidence" value="ECO:0000315"/>
    <property type="project" value="UniProtKB"/>
</dbReference>
<dbReference type="GO" id="GO:0022416">
    <property type="term" value="P:chaeta development"/>
    <property type="evidence" value="ECO:0000315"/>
    <property type="project" value="FlyBase"/>
</dbReference>
<dbReference type="GO" id="GO:0036011">
    <property type="term" value="P:imaginal disc-derived leg segmentation"/>
    <property type="evidence" value="ECO:0000315"/>
    <property type="project" value="FlyBase"/>
</dbReference>
<dbReference type="GO" id="GO:0045944">
    <property type="term" value="P:positive regulation of transcription by RNA polymerase II"/>
    <property type="evidence" value="ECO:0000318"/>
    <property type="project" value="GO_Central"/>
</dbReference>
<dbReference type="GO" id="GO:0006357">
    <property type="term" value="P:regulation of transcription by RNA polymerase II"/>
    <property type="evidence" value="ECO:0000315"/>
    <property type="project" value="UniProtKB"/>
</dbReference>
<dbReference type="GO" id="GO:0045498">
    <property type="term" value="P:sex comb development"/>
    <property type="evidence" value="ECO:0000315"/>
    <property type="project" value="FlyBase"/>
</dbReference>
<dbReference type="GO" id="GO:0034472">
    <property type="term" value="P:snRNA 3'-end processing"/>
    <property type="evidence" value="ECO:0000314"/>
    <property type="project" value="FlyBase"/>
</dbReference>
<dbReference type="CDD" id="cd20513">
    <property type="entry name" value="CYCLIN_CCNC_rpt1"/>
    <property type="match status" value="1"/>
</dbReference>
<dbReference type="CDD" id="cd20514">
    <property type="entry name" value="CYCLIN_CCNC_rpt2"/>
    <property type="match status" value="1"/>
</dbReference>
<dbReference type="FunFam" id="1.10.472.10:FF:000015">
    <property type="entry name" value="Putative cyclin-c"/>
    <property type="match status" value="1"/>
</dbReference>
<dbReference type="FunFam" id="1.10.472.10:FF:000017">
    <property type="entry name" value="Putative cyclin-c"/>
    <property type="match status" value="1"/>
</dbReference>
<dbReference type="Gene3D" id="1.10.472.10">
    <property type="entry name" value="Cyclin-like"/>
    <property type="match status" value="2"/>
</dbReference>
<dbReference type="InterPro" id="IPR013763">
    <property type="entry name" value="Cyclin-like_dom"/>
</dbReference>
<dbReference type="InterPro" id="IPR036915">
    <property type="entry name" value="Cyclin-like_sf"/>
</dbReference>
<dbReference type="InterPro" id="IPR043198">
    <property type="entry name" value="Cyclin/Ssn8"/>
</dbReference>
<dbReference type="InterPro" id="IPR031658">
    <property type="entry name" value="Cyclin_C_2"/>
</dbReference>
<dbReference type="InterPro" id="IPR006671">
    <property type="entry name" value="Cyclin_N"/>
</dbReference>
<dbReference type="PANTHER" id="PTHR10026">
    <property type="entry name" value="CYCLIN"/>
    <property type="match status" value="1"/>
</dbReference>
<dbReference type="Pfam" id="PF16899">
    <property type="entry name" value="Cyclin_C_2"/>
    <property type="match status" value="1"/>
</dbReference>
<dbReference type="Pfam" id="PF00134">
    <property type="entry name" value="Cyclin_N"/>
    <property type="match status" value="1"/>
</dbReference>
<dbReference type="PIRSF" id="PIRSF028758">
    <property type="entry name" value="Cyclin, C/H/G types"/>
    <property type="match status" value="1"/>
</dbReference>
<dbReference type="SMART" id="SM00385">
    <property type="entry name" value="CYCLIN"/>
    <property type="match status" value="2"/>
</dbReference>
<dbReference type="SUPFAM" id="SSF47954">
    <property type="entry name" value="Cyclin-like"/>
    <property type="match status" value="2"/>
</dbReference>
<gene>
    <name type="primary">CycC</name>
    <name type="synonym">CLND</name>
    <name type="ORF">CG7281</name>
</gene>
<name>CCNC_DROME</name>
<sequence length="267" mass="31292">MAGNFWQSSHSQQWILDKPDLLRERQHDLLALNEDEYQKVFIFFANVIQVLGEQLKLRQQVIATATVYFKRFYARNSLKNIDPLLLAPTCILLASKVEEFGVISNSRLISICQSAIKTKFSYAYAQEFPYRTNHILECEFYLLENLDCCLIVYQPYRPLLQLVQDMGQEDQLLTLSWRIVNDSLRTDVCLLYPPYQIAIACLQIACVILQKDATKQWFAELNVDLDKVQEIVRAIVNLYELWKDWKEKDEIQMLLSKIPKPKPPPQR</sequence>
<evidence type="ECO:0000269" key="1">
    <source>
    </source>
</evidence>
<evidence type="ECO:0000269" key="2">
    <source>
    </source>
</evidence>
<evidence type="ECO:0000269" key="3">
    <source>
    </source>
</evidence>
<evidence type="ECO:0000269" key="4">
    <source>
    </source>
</evidence>
<evidence type="ECO:0000305" key="5"/>
<reference key="1">
    <citation type="journal article" date="1991" name="Genes Dev.">
        <title>A novel cyclin gene from Drosophila complements CLN function in yeast.</title>
        <authorList>
            <person name="Lahue E.E."/>
            <person name="Smith A.V."/>
            <person name="Orr-Weaver T.L."/>
        </authorList>
    </citation>
    <scope>NUCLEOTIDE SEQUENCE [MRNA]</scope>
    <scope>FUNCTION</scope>
    <scope>DEVELOPMENTAL STAGE</scope>
</reference>
<reference key="2">
    <citation type="journal article" date="1991" name="Cell">
        <title>An evolutionarily conserved cyclin homolog from Drosophila rescues yeast deficient in G1 cyclins.</title>
        <authorList>
            <person name="Leopold P."/>
            <person name="O'Farrell P.H."/>
        </authorList>
    </citation>
    <scope>NUCLEOTIDE SEQUENCE [MRNA]</scope>
    <scope>FUNCTION</scope>
</reference>
<reference key="3">
    <citation type="journal article" date="2000" name="Science">
        <title>The genome sequence of Drosophila melanogaster.</title>
        <authorList>
            <person name="Adams M.D."/>
            <person name="Celniker S.E."/>
            <person name="Holt R.A."/>
            <person name="Evans C.A."/>
            <person name="Gocayne J.D."/>
            <person name="Amanatides P.G."/>
            <person name="Scherer S.E."/>
            <person name="Li P.W."/>
            <person name="Hoskins R.A."/>
            <person name="Galle R.F."/>
            <person name="George R.A."/>
            <person name="Lewis S.E."/>
            <person name="Richards S."/>
            <person name="Ashburner M."/>
            <person name="Henderson S.N."/>
            <person name="Sutton G.G."/>
            <person name="Wortman J.R."/>
            <person name="Yandell M.D."/>
            <person name="Zhang Q."/>
            <person name="Chen L.X."/>
            <person name="Brandon R.C."/>
            <person name="Rogers Y.-H.C."/>
            <person name="Blazej R.G."/>
            <person name="Champe M."/>
            <person name="Pfeiffer B.D."/>
            <person name="Wan K.H."/>
            <person name="Doyle C."/>
            <person name="Baxter E.G."/>
            <person name="Helt G."/>
            <person name="Nelson C.R."/>
            <person name="Miklos G.L.G."/>
            <person name="Abril J.F."/>
            <person name="Agbayani A."/>
            <person name="An H.-J."/>
            <person name="Andrews-Pfannkoch C."/>
            <person name="Baldwin D."/>
            <person name="Ballew R.M."/>
            <person name="Basu A."/>
            <person name="Baxendale J."/>
            <person name="Bayraktaroglu L."/>
            <person name="Beasley E.M."/>
            <person name="Beeson K.Y."/>
            <person name="Benos P.V."/>
            <person name="Berman B.P."/>
            <person name="Bhandari D."/>
            <person name="Bolshakov S."/>
            <person name="Borkova D."/>
            <person name="Botchan M.R."/>
            <person name="Bouck J."/>
            <person name="Brokstein P."/>
            <person name="Brottier P."/>
            <person name="Burtis K.C."/>
            <person name="Busam D.A."/>
            <person name="Butler H."/>
            <person name="Cadieu E."/>
            <person name="Center A."/>
            <person name="Chandra I."/>
            <person name="Cherry J.M."/>
            <person name="Cawley S."/>
            <person name="Dahlke C."/>
            <person name="Davenport L.B."/>
            <person name="Davies P."/>
            <person name="de Pablos B."/>
            <person name="Delcher A."/>
            <person name="Deng Z."/>
            <person name="Mays A.D."/>
            <person name="Dew I."/>
            <person name="Dietz S.M."/>
            <person name="Dodson K."/>
            <person name="Doup L.E."/>
            <person name="Downes M."/>
            <person name="Dugan-Rocha S."/>
            <person name="Dunkov B.C."/>
            <person name="Dunn P."/>
            <person name="Durbin K.J."/>
            <person name="Evangelista C.C."/>
            <person name="Ferraz C."/>
            <person name="Ferriera S."/>
            <person name="Fleischmann W."/>
            <person name="Fosler C."/>
            <person name="Gabrielian A.E."/>
            <person name="Garg N.S."/>
            <person name="Gelbart W.M."/>
            <person name="Glasser K."/>
            <person name="Glodek A."/>
            <person name="Gong F."/>
            <person name="Gorrell J.H."/>
            <person name="Gu Z."/>
            <person name="Guan P."/>
            <person name="Harris M."/>
            <person name="Harris N.L."/>
            <person name="Harvey D.A."/>
            <person name="Heiman T.J."/>
            <person name="Hernandez J.R."/>
            <person name="Houck J."/>
            <person name="Hostin D."/>
            <person name="Houston K.A."/>
            <person name="Howland T.J."/>
            <person name="Wei M.-H."/>
            <person name="Ibegwam C."/>
            <person name="Jalali M."/>
            <person name="Kalush F."/>
            <person name="Karpen G.H."/>
            <person name="Ke Z."/>
            <person name="Kennison J.A."/>
            <person name="Ketchum K.A."/>
            <person name="Kimmel B.E."/>
            <person name="Kodira C.D."/>
            <person name="Kraft C.L."/>
            <person name="Kravitz S."/>
            <person name="Kulp D."/>
            <person name="Lai Z."/>
            <person name="Lasko P."/>
            <person name="Lei Y."/>
            <person name="Levitsky A.A."/>
            <person name="Li J.H."/>
            <person name="Li Z."/>
            <person name="Liang Y."/>
            <person name="Lin X."/>
            <person name="Liu X."/>
            <person name="Mattei B."/>
            <person name="McIntosh T.C."/>
            <person name="McLeod M.P."/>
            <person name="McPherson D."/>
            <person name="Merkulov G."/>
            <person name="Milshina N.V."/>
            <person name="Mobarry C."/>
            <person name="Morris J."/>
            <person name="Moshrefi A."/>
            <person name="Mount S.M."/>
            <person name="Moy M."/>
            <person name="Murphy B."/>
            <person name="Murphy L."/>
            <person name="Muzny D.M."/>
            <person name="Nelson D.L."/>
            <person name="Nelson D.R."/>
            <person name="Nelson K.A."/>
            <person name="Nixon K."/>
            <person name="Nusskern D.R."/>
            <person name="Pacleb J.M."/>
            <person name="Palazzolo M."/>
            <person name="Pittman G.S."/>
            <person name="Pan S."/>
            <person name="Pollard J."/>
            <person name="Puri V."/>
            <person name="Reese M.G."/>
            <person name="Reinert K."/>
            <person name="Remington K."/>
            <person name="Saunders R.D.C."/>
            <person name="Scheeler F."/>
            <person name="Shen H."/>
            <person name="Shue B.C."/>
            <person name="Siden-Kiamos I."/>
            <person name="Simpson M."/>
            <person name="Skupski M.P."/>
            <person name="Smith T.J."/>
            <person name="Spier E."/>
            <person name="Spradling A.C."/>
            <person name="Stapleton M."/>
            <person name="Strong R."/>
            <person name="Sun E."/>
            <person name="Svirskas R."/>
            <person name="Tector C."/>
            <person name="Turner R."/>
            <person name="Venter E."/>
            <person name="Wang A.H."/>
            <person name="Wang X."/>
            <person name="Wang Z.-Y."/>
            <person name="Wassarman D.A."/>
            <person name="Weinstock G.M."/>
            <person name="Weissenbach J."/>
            <person name="Williams S.M."/>
            <person name="Woodage T."/>
            <person name="Worley K.C."/>
            <person name="Wu D."/>
            <person name="Yang S."/>
            <person name="Yao Q.A."/>
            <person name="Ye J."/>
            <person name="Yeh R.-F."/>
            <person name="Zaveri J.S."/>
            <person name="Zhan M."/>
            <person name="Zhang G."/>
            <person name="Zhao Q."/>
            <person name="Zheng L."/>
            <person name="Zheng X.H."/>
            <person name="Zhong F.N."/>
            <person name="Zhong W."/>
            <person name="Zhou X."/>
            <person name="Zhu S.C."/>
            <person name="Zhu X."/>
            <person name="Smith H.O."/>
            <person name="Gibbs R.A."/>
            <person name="Myers E.W."/>
            <person name="Rubin G.M."/>
            <person name="Venter J.C."/>
        </authorList>
    </citation>
    <scope>NUCLEOTIDE SEQUENCE [LARGE SCALE GENOMIC DNA]</scope>
    <source>
        <strain>Berkeley</strain>
    </source>
</reference>
<reference key="4">
    <citation type="journal article" date="2002" name="Genome Biol.">
        <title>Annotation of the Drosophila melanogaster euchromatic genome: a systematic review.</title>
        <authorList>
            <person name="Misra S."/>
            <person name="Crosby M.A."/>
            <person name="Mungall C.J."/>
            <person name="Matthews B.B."/>
            <person name="Campbell K.S."/>
            <person name="Hradecky P."/>
            <person name="Huang Y."/>
            <person name="Kaminker J.S."/>
            <person name="Millburn G.H."/>
            <person name="Prochnik S.E."/>
            <person name="Smith C.D."/>
            <person name="Tupy J.L."/>
            <person name="Whitfield E.J."/>
            <person name="Bayraktaroglu L."/>
            <person name="Berman B.P."/>
            <person name="Bettencourt B.R."/>
            <person name="Celniker S.E."/>
            <person name="de Grey A.D.N.J."/>
            <person name="Drysdale R.A."/>
            <person name="Harris N.L."/>
            <person name="Richter J."/>
            <person name="Russo S."/>
            <person name="Schroeder A.J."/>
            <person name="Shu S.Q."/>
            <person name="Stapleton M."/>
            <person name="Yamada C."/>
            <person name="Ashburner M."/>
            <person name="Gelbart W.M."/>
            <person name="Rubin G.M."/>
            <person name="Lewis S.E."/>
        </authorList>
    </citation>
    <scope>GENOME REANNOTATION</scope>
    <source>
        <strain>Berkeley</strain>
    </source>
</reference>
<reference key="5">
    <citation type="submission" date="2003-02" db="EMBL/GenBank/DDBJ databases">
        <authorList>
            <person name="Stapleton M."/>
            <person name="Brokstein P."/>
            <person name="Hong L."/>
            <person name="Agbayani A."/>
            <person name="Carlson J.W."/>
            <person name="Champe M."/>
            <person name="Chavez C."/>
            <person name="Dorsett V."/>
            <person name="Dresnek D."/>
            <person name="Farfan D."/>
            <person name="Frise E."/>
            <person name="George R.A."/>
            <person name="Gonzalez M."/>
            <person name="Guarin H."/>
            <person name="Kronmiller B."/>
            <person name="Li P.W."/>
            <person name="Liao G."/>
            <person name="Miranda A."/>
            <person name="Mungall C.J."/>
            <person name="Nunoo J."/>
            <person name="Pacleb J.M."/>
            <person name="Paragas V."/>
            <person name="Park S."/>
            <person name="Patel S."/>
            <person name="Phouanenavong S."/>
            <person name="Wan K.H."/>
            <person name="Yu C."/>
            <person name="Lewis S.E."/>
            <person name="Rubin G.M."/>
            <person name="Celniker S.E."/>
        </authorList>
    </citation>
    <scope>NUCLEOTIDE SEQUENCE [LARGE SCALE MRNA]</scope>
    <source>
        <strain>Berkeley</strain>
        <tissue>Embryo</tissue>
    </source>
</reference>
<reference key="6">
    <citation type="journal article" date="1996" name="Mol. Biol. Cell">
        <title>Drosophila Cdk8, a kinase partner of cyclin C that interacts with the large subunit of RNA polymerase II.</title>
        <authorList>
            <person name="Leclerc V."/>
            <person name="Tassan J.-P."/>
            <person name="O'Farrell P.H."/>
            <person name="Nigg E.A."/>
            <person name="Leopold P."/>
        </authorList>
    </citation>
    <scope>FUNCTION</scope>
    <scope>INTERACTION</scope>
    <scope>SUBCELLULAR LOCATION</scope>
</reference>
<reference key="7">
    <citation type="journal article" date="2007" name="EMBO J.">
        <title>Distinct roles for Mediator Cdk8 module subunits in Drosophila development.</title>
        <authorList>
            <person name="Loncle N."/>
            <person name="Boube M."/>
            <person name="Joulia L."/>
            <person name="Boschiero C."/>
            <person name="Werner M."/>
            <person name="Cribbs D.L."/>
            <person name="Bourbon H.-M."/>
        </authorList>
    </citation>
    <scope>FUNCTION</scope>
    <scope>INTERACTION WITH CYCC; KTO AND SKD</scope>
</reference>
<feature type="chain" id="PRO_0000080424" description="Cyclin-C">
    <location>
        <begin position="1"/>
        <end position="267"/>
    </location>
</feature>
<feature type="domain" description="Cyclin N-terminal">
    <location>
        <begin position="48"/>
        <end position="151"/>
    </location>
</feature>
<organism>
    <name type="scientific">Drosophila melanogaster</name>
    <name type="common">Fruit fly</name>
    <dbReference type="NCBI Taxonomy" id="7227"/>
    <lineage>
        <taxon>Eukaryota</taxon>
        <taxon>Metazoa</taxon>
        <taxon>Ecdysozoa</taxon>
        <taxon>Arthropoda</taxon>
        <taxon>Hexapoda</taxon>
        <taxon>Insecta</taxon>
        <taxon>Pterygota</taxon>
        <taxon>Neoptera</taxon>
        <taxon>Endopterygota</taxon>
        <taxon>Diptera</taxon>
        <taxon>Brachycera</taxon>
        <taxon>Muscomorpha</taxon>
        <taxon>Ephydroidea</taxon>
        <taxon>Drosophilidae</taxon>
        <taxon>Drosophila</taxon>
        <taxon>Sophophora</taxon>
    </lineage>
</organism>
<proteinExistence type="evidence at protein level"/>
<accession>P25008</accession>
<accession>Q9VFF1</accession>
<keyword id="KW-0195">Cyclin</keyword>
<keyword id="KW-0217">Developmental protein</keyword>
<keyword id="KW-0539">Nucleus</keyword>
<keyword id="KW-1185">Reference proteome</keyword>
<keyword id="KW-0678">Repressor</keyword>
<keyword id="KW-0804">Transcription</keyword>
<keyword id="KW-0805">Transcription regulation</keyword>
<protein>
    <recommendedName>
        <fullName>Cyclin-C</fullName>
    </recommendedName>
</protein>
<comment type="function">
    <text evidence="1 2 3 4">Component of the Mediator complex, a coactivator involved in regulated gene transcription of nearly all RNA polymerase II-dependent genes. Mediator functions as a bridge to convey information from gene-specific regulatory proteins to the basal RNA polymerase II transcription machinery. Mediator is recruited to promoters by direct interactions with regulatory proteins and serves as a scaffold for the assembly of a functional preinitiation complex with RNA polymerase II and the general transcription factors. Binds to and activates cyclin-dependent kinase Cdk8 that phosphorylates the CTD (C-terminal domain) of the large subunit of RNA polymerase II (RNAp II), which may inhibit the formation of a transcription initiation complex. Required for leg and eye development and macrochaete specification or differentiation.</text>
</comment>
<comment type="subunit">
    <text>Component of the Cdk8 module of the Mediator complex, composed of CycC, Cdk8, kto and skd.</text>
</comment>
<comment type="interaction">
    <interactant intactId="EBI-195485">
        <id>P25008</id>
    </interactant>
    <interactant intactId="EBI-108689">
        <id>P23572</id>
        <label>Cdk1</label>
    </interactant>
    <organismsDiffer>false</organismsDiffer>
    <experiments>4</experiments>
</comment>
<comment type="interaction">
    <interactant intactId="EBI-195485">
        <id>P25008</id>
    </interactant>
    <interactant intactId="EBI-94216">
        <id>P48609</id>
        <label>Cdk5</label>
    </interactant>
    <organismsDiffer>false</organismsDiffer>
    <experiments>4</experiments>
</comment>
<comment type="interaction">
    <interactant intactId="EBI-195485">
        <id>P25008</id>
    </interactant>
    <interactant intactId="EBI-163640">
        <id>Q9VT57</id>
        <label>Cdk8</label>
    </interactant>
    <organismsDiffer>false</organismsDiffer>
    <experiments>2</experiments>
</comment>
<comment type="interaction">
    <interactant intactId="EBI-195485">
        <id>P25008</id>
    </interactant>
    <interactant intactId="EBI-139710">
        <id>Q9VW47</id>
        <label>kto</label>
    </interactant>
    <organismsDiffer>false</organismsDiffer>
    <experiments>2</experiments>
</comment>
<comment type="interaction">
    <interactant intactId="EBI-195485">
        <id>P25008</id>
    </interactant>
    <interactant intactId="EBI-110730">
        <id>Q7KTX8</id>
        <label>skd</label>
    </interactant>
    <organismsDiffer>false</organismsDiffer>
    <experiments>2</experiments>
</comment>
<comment type="subcellular location">
    <subcellularLocation>
        <location evidence="4">Nucleus</location>
    </subcellularLocation>
</comment>
<comment type="developmental stage">
    <text evidence="3">Expressed both maternally and zygotically during developmental periods of maximal cell division; most abundant in early embryos and low levels in larvae, pupae and adults.</text>
</comment>
<comment type="similarity">
    <text evidence="5">Belongs to the cyclin family. Cyclin C subfamily.</text>
</comment>